<accession>Q7U5G1</accession>
<comment type="catalytic activity">
    <reaction>
        <text>2 pyruvate + H(+) = (2S)-2-acetolactate + CO2</text>
        <dbReference type="Rhea" id="RHEA:25249"/>
        <dbReference type="ChEBI" id="CHEBI:15361"/>
        <dbReference type="ChEBI" id="CHEBI:15378"/>
        <dbReference type="ChEBI" id="CHEBI:16526"/>
        <dbReference type="ChEBI" id="CHEBI:58476"/>
        <dbReference type="EC" id="2.2.1.6"/>
    </reaction>
</comment>
<comment type="cofactor">
    <cofactor evidence="1">
        <name>Mg(2+)</name>
        <dbReference type="ChEBI" id="CHEBI:18420"/>
    </cofactor>
    <text evidence="1">Binds 1 Mg(2+) ion per subunit.</text>
</comment>
<comment type="cofactor">
    <cofactor evidence="1">
        <name>thiamine diphosphate</name>
        <dbReference type="ChEBI" id="CHEBI:58937"/>
    </cofactor>
    <text evidence="1">Binds 1 thiamine pyrophosphate per subunit.</text>
</comment>
<comment type="pathway">
    <text>Amino-acid biosynthesis; L-isoleucine biosynthesis; L-isoleucine from 2-oxobutanoate: step 1/4.</text>
</comment>
<comment type="pathway">
    <text>Amino-acid biosynthesis; L-valine biosynthesis; L-valine from pyruvate: step 1/4.</text>
</comment>
<comment type="subunit">
    <text evidence="1">Dimer of large and small chains.</text>
</comment>
<comment type="similarity">
    <text evidence="2">Belongs to the TPP enzyme family.</text>
</comment>
<feature type="chain" id="PRO_0000090806" description="Acetolactate synthase large subunit">
    <location>
        <begin position="1"/>
        <end position="617"/>
    </location>
</feature>
<feature type="region of interest" description="Thiamine pyrophosphate binding">
    <location>
        <begin position="413"/>
        <end position="492"/>
    </location>
</feature>
<feature type="binding site" evidence="1">
    <location>
        <position position="71"/>
    </location>
    <ligand>
        <name>thiamine diphosphate</name>
        <dbReference type="ChEBI" id="CHEBI:58937"/>
    </ligand>
</feature>
<feature type="binding site" evidence="1">
    <location>
        <position position="173"/>
    </location>
    <ligand>
        <name>FAD</name>
        <dbReference type="ChEBI" id="CHEBI:57692"/>
    </ligand>
</feature>
<feature type="binding site" evidence="1">
    <location>
        <begin position="281"/>
        <end position="302"/>
    </location>
    <ligand>
        <name>FAD</name>
        <dbReference type="ChEBI" id="CHEBI:57692"/>
    </ligand>
</feature>
<feature type="binding site" evidence="1">
    <location>
        <begin position="324"/>
        <end position="343"/>
    </location>
    <ligand>
        <name>FAD</name>
        <dbReference type="ChEBI" id="CHEBI:57692"/>
    </ligand>
</feature>
<feature type="binding site" evidence="1">
    <location>
        <position position="463"/>
    </location>
    <ligand>
        <name>Mg(2+)</name>
        <dbReference type="ChEBI" id="CHEBI:18420"/>
    </ligand>
</feature>
<feature type="binding site" evidence="1">
    <location>
        <position position="490"/>
    </location>
    <ligand>
        <name>Mg(2+)</name>
        <dbReference type="ChEBI" id="CHEBI:18420"/>
    </ligand>
</feature>
<reference key="1">
    <citation type="journal article" date="2003" name="Nature">
        <title>The genome of a motile marine Synechococcus.</title>
        <authorList>
            <person name="Palenik B."/>
            <person name="Brahamsha B."/>
            <person name="Larimer F.W."/>
            <person name="Land M.L."/>
            <person name="Hauser L."/>
            <person name="Chain P."/>
            <person name="Lamerdin J.E."/>
            <person name="Regala W."/>
            <person name="Allen E.E."/>
            <person name="McCarren J."/>
            <person name="Paulsen I.T."/>
            <person name="Dufresne A."/>
            <person name="Partensky F."/>
            <person name="Webb E.A."/>
            <person name="Waterbury J."/>
        </authorList>
    </citation>
    <scope>NUCLEOTIDE SEQUENCE [LARGE SCALE GENOMIC DNA]</scope>
    <source>
        <strain>WH8102</strain>
    </source>
</reference>
<keyword id="KW-0028">Amino-acid biosynthesis</keyword>
<keyword id="KW-0100">Branched-chain amino acid biosynthesis</keyword>
<keyword id="KW-0274">FAD</keyword>
<keyword id="KW-0285">Flavoprotein</keyword>
<keyword id="KW-0460">Magnesium</keyword>
<keyword id="KW-0479">Metal-binding</keyword>
<keyword id="KW-0786">Thiamine pyrophosphate</keyword>
<keyword id="KW-0808">Transferase</keyword>
<dbReference type="EC" id="2.2.1.6"/>
<dbReference type="EMBL" id="BX569693">
    <property type="protein sequence ID" value="CAE08261.1"/>
    <property type="molecule type" value="Genomic_DNA"/>
</dbReference>
<dbReference type="RefSeq" id="WP_011128606.1">
    <property type="nucleotide sequence ID" value="NC_005070.1"/>
</dbReference>
<dbReference type="SMR" id="Q7U5G1"/>
<dbReference type="STRING" id="84588.SYNW1746"/>
<dbReference type="KEGG" id="syw:SYNW1746"/>
<dbReference type="eggNOG" id="COG0028">
    <property type="taxonomic scope" value="Bacteria"/>
</dbReference>
<dbReference type="HOGENOM" id="CLU_013748_1_2_3"/>
<dbReference type="UniPathway" id="UPA00047">
    <property type="reaction ID" value="UER00055"/>
</dbReference>
<dbReference type="UniPathway" id="UPA00049">
    <property type="reaction ID" value="UER00059"/>
</dbReference>
<dbReference type="Proteomes" id="UP000001422">
    <property type="component" value="Chromosome"/>
</dbReference>
<dbReference type="GO" id="GO:0005948">
    <property type="term" value="C:acetolactate synthase complex"/>
    <property type="evidence" value="ECO:0007669"/>
    <property type="project" value="TreeGrafter"/>
</dbReference>
<dbReference type="GO" id="GO:0003984">
    <property type="term" value="F:acetolactate synthase activity"/>
    <property type="evidence" value="ECO:0007669"/>
    <property type="project" value="UniProtKB-EC"/>
</dbReference>
<dbReference type="GO" id="GO:0050660">
    <property type="term" value="F:flavin adenine dinucleotide binding"/>
    <property type="evidence" value="ECO:0007669"/>
    <property type="project" value="InterPro"/>
</dbReference>
<dbReference type="GO" id="GO:0000287">
    <property type="term" value="F:magnesium ion binding"/>
    <property type="evidence" value="ECO:0007669"/>
    <property type="project" value="InterPro"/>
</dbReference>
<dbReference type="GO" id="GO:0030976">
    <property type="term" value="F:thiamine pyrophosphate binding"/>
    <property type="evidence" value="ECO:0007669"/>
    <property type="project" value="InterPro"/>
</dbReference>
<dbReference type="GO" id="GO:0009097">
    <property type="term" value="P:isoleucine biosynthetic process"/>
    <property type="evidence" value="ECO:0007669"/>
    <property type="project" value="UniProtKB-UniPathway"/>
</dbReference>
<dbReference type="GO" id="GO:0009099">
    <property type="term" value="P:L-valine biosynthetic process"/>
    <property type="evidence" value="ECO:0007669"/>
    <property type="project" value="UniProtKB-UniPathway"/>
</dbReference>
<dbReference type="CDD" id="cd02015">
    <property type="entry name" value="TPP_AHAS"/>
    <property type="match status" value="1"/>
</dbReference>
<dbReference type="CDD" id="cd07035">
    <property type="entry name" value="TPP_PYR_POX_like"/>
    <property type="match status" value="1"/>
</dbReference>
<dbReference type="FunFam" id="3.40.50.1220:FF:000008">
    <property type="entry name" value="Acetolactate synthase"/>
    <property type="match status" value="1"/>
</dbReference>
<dbReference type="FunFam" id="3.40.50.970:FF:000007">
    <property type="entry name" value="Acetolactate synthase"/>
    <property type="match status" value="1"/>
</dbReference>
<dbReference type="FunFam" id="3.40.50.970:FF:000016">
    <property type="entry name" value="Acetolactate synthase"/>
    <property type="match status" value="1"/>
</dbReference>
<dbReference type="Gene3D" id="3.40.50.970">
    <property type="match status" value="2"/>
</dbReference>
<dbReference type="Gene3D" id="3.40.50.1220">
    <property type="entry name" value="TPP-binding domain"/>
    <property type="match status" value="1"/>
</dbReference>
<dbReference type="InterPro" id="IPR012846">
    <property type="entry name" value="Acetolactate_synth_lsu"/>
</dbReference>
<dbReference type="InterPro" id="IPR039368">
    <property type="entry name" value="AHAS_TPP"/>
</dbReference>
<dbReference type="InterPro" id="IPR029035">
    <property type="entry name" value="DHS-like_NAD/FAD-binding_dom"/>
</dbReference>
<dbReference type="InterPro" id="IPR029061">
    <property type="entry name" value="THDP-binding"/>
</dbReference>
<dbReference type="InterPro" id="IPR012000">
    <property type="entry name" value="Thiamin_PyroP_enz_cen_dom"/>
</dbReference>
<dbReference type="InterPro" id="IPR012001">
    <property type="entry name" value="Thiamin_PyroP_enz_TPP-bd_dom"/>
</dbReference>
<dbReference type="InterPro" id="IPR000399">
    <property type="entry name" value="TPP-bd_CS"/>
</dbReference>
<dbReference type="InterPro" id="IPR045229">
    <property type="entry name" value="TPP_enz"/>
</dbReference>
<dbReference type="InterPro" id="IPR011766">
    <property type="entry name" value="TPP_enzyme_TPP-bd"/>
</dbReference>
<dbReference type="NCBIfam" id="TIGR00118">
    <property type="entry name" value="acolac_lg"/>
    <property type="match status" value="1"/>
</dbReference>
<dbReference type="NCBIfam" id="NF005651">
    <property type="entry name" value="PRK07418.1"/>
    <property type="match status" value="1"/>
</dbReference>
<dbReference type="PANTHER" id="PTHR18968:SF13">
    <property type="entry name" value="ACETOLACTATE SYNTHASE CATALYTIC SUBUNIT, MITOCHONDRIAL"/>
    <property type="match status" value="1"/>
</dbReference>
<dbReference type="PANTHER" id="PTHR18968">
    <property type="entry name" value="THIAMINE PYROPHOSPHATE ENZYMES"/>
    <property type="match status" value="1"/>
</dbReference>
<dbReference type="Pfam" id="PF02775">
    <property type="entry name" value="TPP_enzyme_C"/>
    <property type="match status" value="1"/>
</dbReference>
<dbReference type="Pfam" id="PF00205">
    <property type="entry name" value="TPP_enzyme_M"/>
    <property type="match status" value="1"/>
</dbReference>
<dbReference type="Pfam" id="PF02776">
    <property type="entry name" value="TPP_enzyme_N"/>
    <property type="match status" value="1"/>
</dbReference>
<dbReference type="SUPFAM" id="SSF52467">
    <property type="entry name" value="DHS-like NAD/FAD-binding domain"/>
    <property type="match status" value="1"/>
</dbReference>
<dbReference type="SUPFAM" id="SSF52518">
    <property type="entry name" value="Thiamin diphosphate-binding fold (THDP-binding)"/>
    <property type="match status" value="2"/>
</dbReference>
<dbReference type="PROSITE" id="PS00187">
    <property type="entry name" value="TPP_ENZYMES"/>
    <property type="match status" value="1"/>
</dbReference>
<evidence type="ECO:0000250" key="1"/>
<evidence type="ECO:0000305" key="2"/>
<protein>
    <recommendedName>
        <fullName>Acetolactate synthase large subunit</fullName>
        <shortName>AHAS</shortName>
        <ecNumber>2.2.1.6</ecNumber>
    </recommendedName>
    <alternativeName>
        <fullName>Acetohydroxy-acid synthase large subunit</fullName>
        <shortName>ALS</shortName>
    </alternativeName>
</protein>
<organism>
    <name type="scientific">Parasynechococcus marenigrum (strain WH8102)</name>
    <dbReference type="NCBI Taxonomy" id="84588"/>
    <lineage>
        <taxon>Bacteria</taxon>
        <taxon>Bacillati</taxon>
        <taxon>Cyanobacteriota</taxon>
        <taxon>Cyanophyceae</taxon>
        <taxon>Synechococcales</taxon>
        <taxon>Prochlorococcaceae</taxon>
        <taxon>Parasynechococcus</taxon>
        <taxon>Parasynechococcus marenigrum</taxon>
    </lineage>
</organism>
<name>ILVB_PARMW</name>
<sequence length="617" mass="65621">MTLTSASTVVGGLDANAPQTISGAAALMDALRRHGVDTIFGYPGGAILPIYDALHIAESEGWVKHILVRHEQAGTHAADAYARATGKVGVCFGTSGPGATNLVTGIATAQMDSVPMVVITGQVPRPAIGTDAFQETDIFGITLPIVKHSWVVRDPADLGSIVAQAFLIAASGRPGPVLIDIPKDVGQEQFNYVPVEPGSVIPGGFHQPEPPLDAAVAAALDLIEQAQRPLLYVGGGAISACAHDSLRMLAERYQLPVTTTLMGKGAFDENDALSVGMLGMHGTAYANFAVTECDLLIAVGARFDDRVTGKLDTFAPRARVVHFEIDPAEIGKNRKADVAVLGDLGLSLARMVEISLQRTAEPRTAAWLERINTWKDRYPLTIPPAEGAIYPQEVLLAVRDLAPDAIVTTDVGQHQMWAAQHLRNGPRGWISSAGLGTMGFGMPAAMGAQVAMPDRQVVCIAGDASILMNIQELGTLAAYGLPVKVVIVNNHWQGMVRQWQESFYDERYSASDMLNGMPDFIALARSFGVDGVKITDRELLHRDLAAALQSPTPTMIDVHVRRGENCYPMVPPGKSNAQMVGLPSHPELAMGTTRTCSSCGAITAHEHRFCPQCGASL</sequence>
<proteinExistence type="inferred from homology"/>
<gene>
    <name type="primary">ilvB</name>
    <name type="ordered locus">SYNW1746</name>
</gene>